<gene>
    <name type="primary">SLC35D2</name>
</gene>
<protein>
    <recommendedName>
        <fullName evidence="1">Nucleotide sugar transporter SLC35D2</fullName>
    </recommendedName>
    <alternativeName>
        <fullName>Solute carrier family 35 member D2</fullName>
    </alternativeName>
</protein>
<sequence>MAEVHRRQHARVKGEAPAKSSTLRDEEELGMASAETLTVFLKLLAAGFYGVSSFLIVVVNKSVLTNYRFPSSLCVGLGQMVATVAVLWVGKALRVVKFPDLDRNVPRKTFPLPLLYFGNQITGLFSTKKLNLPMFTVLRRFSILFTMFAEGVLLKKTFSWGIKMTVFAMIIGAFVAASSDLAFDLEGYVFILINDVLTAANGAYVKQKLDSKELGKYGLLYYNALFMILPTLAIAYFTGDAQKAVEFEGWADTLFLLQFTLSCVMGFILMYATVLCTQYNSALTTTIVGCIKNILITYIGMVFGGDYIFTWTNFIGLNISIAGSLVYSYITFTEEQLSKQSEANNKLDIKGKGAV</sequence>
<accession>Q5RDC9</accession>
<feature type="chain" id="PRO_0000313083" description="Nucleotide sugar transporter SLC35D2">
    <location>
        <begin position="1"/>
        <end position="355"/>
    </location>
</feature>
<feature type="topological domain" description="Cytoplasmic" evidence="2">
    <location>
        <begin position="1"/>
        <end position="38"/>
    </location>
</feature>
<feature type="transmembrane region" description="Helical" evidence="2">
    <location>
        <begin position="39"/>
        <end position="59"/>
    </location>
</feature>
<feature type="topological domain" description="Extracellular" evidence="2">
    <location>
        <begin position="60"/>
        <end position="68"/>
    </location>
</feature>
<feature type="transmembrane region" description="Helical" evidence="2">
    <location>
        <begin position="69"/>
        <end position="89"/>
    </location>
</feature>
<feature type="topological domain" description="Cytoplasmic" evidence="2">
    <location>
        <begin position="90"/>
        <end position="156"/>
    </location>
</feature>
<feature type="transmembrane region" description="Helical" evidence="2">
    <location>
        <begin position="157"/>
        <end position="177"/>
    </location>
</feature>
<feature type="topological domain" description="Extracellular" evidence="2">
    <location>
        <begin position="178"/>
        <end position="184"/>
    </location>
</feature>
<feature type="transmembrane region" description="Helical" evidence="2">
    <location>
        <begin position="185"/>
        <end position="205"/>
    </location>
</feature>
<feature type="topological domain" description="Cytoplasmic" evidence="2">
    <location>
        <begin position="206"/>
        <end position="216"/>
    </location>
</feature>
<feature type="transmembrane region" description="Helical" evidence="2">
    <location>
        <begin position="217"/>
        <end position="237"/>
    </location>
</feature>
<feature type="topological domain" description="Extracellular" evidence="2">
    <location>
        <begin position="238"/>
        <end position="253"/>
    </location>
</feature>
<feature type="transmembrane region" description="Helical" evidence="2">
    <location>
        <begin position="254"/>
        <end position="274"/>
    </location>
</feature>
<feature type="topological domain" description="Cytoplasmic" evidence="2">
    <location>
        <begin position="275"/>
        <end position="280"/>
    </location>
</feature>
<feature type="transmembrane region" description="Helical" evidence="2">
    <location>
        <begin position="281"/>
        <end position="303"/>
    </location>
</feature>
<feature type="topological domain" description="Extracellular" evidence="2">
    <location>
        <begin position="304"/>
        <end position="314"/>
    </location>
</feature>
<feature type="transmembrane region" description="Helical" evidence="2">
    <location>
        <begin position="315"/>
        <end position="335"/>
    </location>
</feature>
<feature type="topological domain" description="Cytoplasmic" evidence="2">
    <location>
        <begin position="336"/>
        <end position="355"/>
    </location>
</feature>
<feature type="region of interest" description="Disordered" evidence="3">
    <location>
        <begin position="1"/>
        <end position="22"/>
    </location>
</feature>
<feature type="compositionally biased region" description="Basic residues" evidence="3">
    <location>
        <begin position="1"/>
        <end position="11"/>
    </location>
</feature>
<comment type="function">
    <text evidence="1">Nucleotide sugar antiporter transporting UDP-N-acetylglucosamine (UDP-GlcNAc) and UDP-glucose (UDP-Glc) from the cytosol into the lumen of the Golgi in exchange of UMP. By supplying UDP-N-acetylglucosamine, a donor substrate to heparan sulfate synthases, probably takes part in the synthesis of these glycoconjugates.</text>
</comment>
<comment type="catalytic activity">
    <reaction evidence="1">
        <text>UMP(out) + UDP-N-acetyl-alpha-D-glucosamine(in) = UMP(in) + UDP-N-acetyl-alpha-D-glucosamine(out)</text>
        <dbReference type="Rhea" id="RHEA:72695"/>
        <dbReference type="ChEBI" id="CHEBI:57705"/>
        <dbReference type="ChEBI" id="CHEBI:57865"/>
    </reaction>
</comment>
<comment type="catalytic activity">
    <reaction evidence="1">
        <text>UMP(out) + UDP-alpha-D-glucose(in) = UMP(in) + UDP-alpha-D-glucose(out)</text>
        <dbReference type="Rhea" id="RHEA:72731"/>
        <dbReference type="ChEBI" id="CHEBI:57865"/>
        <dbReference type="ChEBI" id="CHEBI:58885"/>
    </reaction>
</comment>
<comment type="subcellular location">
    <subcellularLocation>
        <location evidence="1">Golgi apparatus membrane</location>
        <topology evidence="2">Multi-pass membrane protein</topology>
    </subcellularLocation>
</comment>
<comment type="similarity">
    <text evidence="4">Belongs to the TPT transporter family. SLC35D subfamily.</text>
</comment>
<evidence type="ECO:0000250" key="1">
    <source>
        <dbReference type="UniProtKB" id="Q76EJ3"/>
    </source>
</evidence>
<evidence type="ECO:0000255" key="2"/>
<evidence type="ECO:0000256" key="3">
    <source>
        <dbReference type="SAM" id="MobiDB-lite"/>
    </source>
</evidence>
<evidence type="ECO:0000305" key="4"/>
<organism>
    <name type="scientific">Pongo abelii</name>
    <name type="common">Sumatran orangutan</name>
    <name type="synonym">Pongo pygmaeus abelii</name>
    <dbReference type="NCBI Taxonomy" id="9601"/>
    <lineage>
        <taxon>Eukaryota</taxon>
        <taxon>Metazoa</taxon>
        <taxon>Chordata</taxon>
        <taxon>Craniata</taxon>
        <taxon>Vertebrata</taxon>
        <taxon>Euteleostomi</taxon>
        <taxon>Mammalia</taxon>
        <taxon>Eutheria</taxon>
        <taxon>Euarchontoglires</taxon>
        <taxon>Primates</taxon>
        <taxon>Haplorrhini</taxon>
        <taxon>Catarrhini</taxon>
        <taxon>Hominidae</taxon>
        <taxon>Pongo</taxon>
    </lineage>
</organism>
<reference key="1">
    <citation type="submission" date="2004-11" db="EMBL/GenBank/DDBJ databases">
        <authorList>
            <consortium name="The German cDNA consortium"/>
        </authorList>
    </citation>
    <scope>NUCLEOTIDE SEQUENCE [LARGE SCALE MRNA]</scope>
    <source>
        <tissue>Kidney</tissue>
    </source>
</reference>
<keyword id="KW-0050">Antiport</keyword>
<keyword id="KW-0333">Golgi apparatus</keyword>
<keyword id="KW-0472">Membrane</keyword>
<keyword id="KW-1185">Reference proteome</keyword>
<keyword id="KW-0762">Sugar transport</keyword>
<keyword id="KW-0812">Transmembrane</keyword>
<keyword id="KW-1133">Transmembrane helix</keyword>
<keyword id="KW-0813">Transport</keyword>
<proteinExistence type="evidence at transcript level"/>
<name>S35D2_PONAB</name>
<dbReference type="EMBL" id="CR857985">
    <property type="protein sequence ID" value="CAH90228.1"/>
    <property type="molecule type" value="mRNA"/>
</dbReference>
<dbReference type="RefSeq" id="NP_001125094.1">
    <property type="nucleotide sequence ID" value="NM_001131622.1"/>
</dbReference>
<dbReference type="SMR" id="Q5RDC9"/>
<dbReference type="FunCoup" id="Q5RDC9">
    <property type="interactions" value="774"/>
</dbReference>
<dbReference type="STRING" id="9601.ENSPPYP00000001467"/>
<dbReference type="Ensembl" id="ENSPPYT00000060316.1">
    <property type="protein sequence ID" value="ENSPPYP00000030656.1"/>
    <property type="gene ID" value="ENSPPYG00000041264.1"/>
</dbReference>
<dbReference type="GeneID" id="100171976"/>
<dbReference type="KEGG" id="pon:100171976"/>
<dbReference type="CTD" id="23169"/>
<dbReference type="eggNOG" id="KOG1444">
    <property type="taxonomic scope" value="Eukaryota"/>
</dbReference>
<dbReference type="GeneTree" id="ENSGT00940000155665"/>
<dbReference type="HOGENOM" id="CLU_040726_1_0_1"/>
<dbReference type="InParanoid" id="Q5RDC9"/>
<dbReference type="OMA" id="VWMLINC"/>
<dbReference type="OrthoDB" id="417037at2759"/>
<dbReference type="TreeFam" id="TF313307"/>
<dbReference type="Proteomes" id="UP000001595">
    <property type="component" value="Chromosome 1"/>
</dbReference>
<dbReference type="GO" id="GO:0005783">
    <property type="term" value="C:endoplasmic reticulum"/>
    <property type="evidence" value="ECO:0007669"/>
    <property type="project" value="Ensembl"/>
</dbReference>
<dbReference type="GO" id="GO:0000139">
    <property type="term" value="C:Golgi membrane"/>
    <property type="evidence" value="ECO:0000250"/>
    <property type="project" value="UniProtKB"/>
</dbReference>
<dbReference type="GO" id="GO:0015297">
    <property type="term" value="F:antiporter activity"/>
    <property type="evidence" value="ECO:0007669"/>
    <property type="project" value="UniProtKB-KW"/>
</dbReference>
<dbReference type="GO" id="GO:0005338">
    <property type="term" value="F:nucleotide-sugar transmembrane transporter activity"/>
    <property type="evidence" value="ECO:0000250"/>
    <property type="project" value="UniProtKB"/>
</dbReference>
<dbReference type="GO" id="GO:0015165">
    <property type="term" value="F:pyrimidine nucleotide-sugar transmembrane transporter activity"/>
    <property type="evidence" value="ECO:0007669"/>
    <property type="project" value="Ensembl"/>
</dbReference>
<dbReference type="GO" id="GO:0048706">
    <property type="term" value="P:embryonic skeletal system development"/>
    <property type="evidence" value="ECO:0007669"/>
    <property type="project" value="Ensembl"/>
</dbReference>
<dbReference type="GO" id="GO:0015012">
    <property type="term" value="P:heparan sulfate proteoglycan biosynthetic process"/>
    <property type="evidence" value="ECO:0000250"/>
    <property type="project" value="UniProtKB"/>
</dbReference>
<dbReference type="InterPro" id="IPR004853">
    <property type="entry name" value="Sugar_P_trans_dom"/>
</dbReference>
<dbReference type="InterPro" id="IPR050186">
    <property type="entry name" value="TPT_transporter"/>
</dbReference>
<dbReference type="PANTHER" id="PTHR11132">
    <property type="entry name" value="SOLUTE CARRIER FAMILY 35"/>
    <property type="match status" value="1"/>
</dbReference>
<dbReference type="Pfam" id="PF03151">
    <property type="entry name" value="TPT"/>
    <property type="match status" value="1"/>
</dbReference>